<feature type="chain" id="PRO_1000205409" description="Small ribosomal subunit protein bS6">
    <location>
        <begin position="1"/>
        <end position="124"/>
    </location>
</feature>
<feature type="region of interest" description="Disordered" evidence="2">
    <location>
        <begin position="98"/>
        <end position="124"/>
    </location>
</feature>
<feature type="compositionally biased region" description="Basic and acidic residues" evidence="2">
    <location>
        <begin position="104"/>
        <end position="115"/>
    </location>
</feature>
<gene>
    <name evidence="1" type="primary">rpsF</name>
    <name type="ordered locus">Tola_2499</name>
</gene>
<sequence length="124" mass="14516">MRHYEIVFMVHPDQSEQVPGMIERYTGAIKAAGGTIHRLEDWGRRQLAYPIDKLHKAHYVLMNVEAEQSVIDELENNFRFNDAVIRNMIMRTKHAVTEASPMLKAREERPRREDVREEAEEAAE</sequence>
<name>RS6_TOLAT</name>
<accession>C4LAB8</accession>
<protein>
    <recommendedName>
        <fullName evidence="1">Small ribosomal subunit protein bS6</fullName>
    </recommendedName>
    <alternativeName>
        <fullName evidence="3">30S ribosomal protein S6</fullName>
    </alternativeName>
</protein>
<organism>
    <name type="scientific">Tolumonas auensis (strain DSM 9187 / NBRC 110442 / TA 4)</name>
    <dbReference type="NCBI Taxonomy" id="595494"/>
    <lineage>
        <taxon>Bacteria</taxon>
        <taxon>Pseudomonadati</taxon>
        <taxon>Pseudomonadota</taxon>
        <taxon>Gammaproteobacteria</taxon>
        <taxon>Aeromonadales</taxon>
        <taxon>Aeromonadaceae</taxon>
        <taxon>Tolumonas</taxon>
    </lineage>
</organism>
<proteinExistence type="inferred from homology"/>
<keyword id="KW-1185">Reference proteome</keyword>
<keyword id="KW-0687">Ribonucleoprotein</keyword>
<keyword id="KW-0689">Ribosomal protein</keyword>
<keyword id="KW-0694">RNA-binding</keyword>
<keyword id="KW-0699">rRNA-binding</keyword>
<comment type="function">
    <text evidence="1">Binds together with bS18 to 16S ribosomal RNA.</text>
</comment>
<comment type="similarity">
    <text evidence="1">Belongs to the bacterial ribosomal protein bS6 family.</text>
</comment>
<dbReference type="EMBL" id="CP001616">
    <property type="protein sequence ID" value="ACQ94093.1"/>
    <property type="molecule type" value="Genomic_DNA"/>
</dbReference>
<dbReference type="RefSeq" id="WP_015879542.1">
    <property type="nucleotide sequence ID" value="NC_012691.1"/>
</dbReference>
<dbReference type="SMR" id="C4LAB8"/>
<dbReference type="STRING" id="595494.Tola_2499"/>
<dbReference type="KEGG" id="tau:Tola_2499"/>
<dbReference type="eggNOG" id="COG0360">
    <property type="taxonomic scope" value="Bacteria"/>
</dbReference>
<dbReference type="HOGENOM" id="CLU_113441_6_1_6"/>
<dbReference type="OrthoDB" id="9812702at2"/>
<dbReference type="Proteomes" id="UP000009073">
    <property type="component" value="Chromosome"/>
</dbReference>
<dbReference type="GO" id="GO:0022627">
    <property type="term" value="C:cytosolic small ribosomal subunit"/>
    <property type="evidence" value="ECO:0007669"/>
    <property type="project" value="TreeGrafter"/>
</dbReference>
<dbReference type="GO" id="GO:0070181">
    <property type="term" value="F:small ribosomal subunit rRNA binding"/>
    <property type="evidence" value="ECO:0007669"/>
    <property type="project" value="TreeGrafter"/>
</dbReference>
<dbReference type="GO" id="GO:0003735">
    <property type="term" value="F:structural constituent of ribosome"/>
    <property type="evidence" value="ECO:0007669"/>
    <property type="project" value="InterPro"/>
</dbReference>
<dbReference type="GO" id="GO:0006412">
    <property type="term" value="P:translation"/>
    <property type="evidence" value="ECO:0007669"/>
    <property type="project" value="UniProtKB-UniRule"/>
</dbReference>
<dbReference type="CDD" id="cd00473">
    <property type="entry name" value="bS6"/>
    <property type="match status" value="1"/>
</dbReference>
<dbReference type="FunFam" id="3.30.70.60:FF:000003">
    <property type="entry name" value="30S ribosomal protein S6"/>
    <property type="match status" value="1"/>
</dbReference>
<dbReference type="Gene3D" id="3.30.70.60">
    <property type="match status" value="1"/>
</dbReference>
<dbReference type="HAMAP" id="MF_00360">
    <property type="entry name" value="Ribosomal_bS6"/>
    <property type="match status" value="1"/>
</dbReference>
<dbReference type="InterPro" id="IPR000529">
    <property type="entry name" value="Ribosomal_bS6"/>
</dbReference>
<dbReference type="InterPro" id="IPR035980">
    <property type="entry name" value="Ribosomal_bS6_sf"/>
</dbReference>
<dbReference type="InterPro" id="IPR020814">
    <property type="entry name" value="Ribosomal_S6_plastid/chlpt"/>
</dbReference>
<dbReference type="InterPro" id="IPR014717">
    <property type="entry name" value="Transl_elong_EF1B/ribsomal_bS6"/>
</dbReference>
<dbReference type="NCBIfam" id="TIGR00166">
    <property type="entry name" value="S6"/>
    <property type="match status" value="1"/>
</dbReference>
<dbReference type="PANTHER" id="PTHR21011">
    <property type="entry name" value="MITOCHONDRIAL 28S RIBOSOMAL PROTEIN S6"/>
    <property type="match status" value="1"/>
</dbReference>
<dbReference type="PANTHER" id="PTHR21011:SF1">
    <property type="entry name" value="SMALL RIBOSOMAL SUBUNIT PROTEIN BS6M"/>
    <property type="match status" value="1"/>
</dbReference>
<dbReference type="Pfam" id="PF01250">
    <property type="entry name" value="Ribosomal_S6"/>
    <property type="match status" value="1"/>
</dbReference>
<dbReference type="SUPFAM" id="SSF54995">
    <property type="entry name" value="Ribosomal protein S6"/>
    <property type="match status" value="1"/>
</dbReference>
<evidence type="ECO:0000255" key="1">
    <source>
        <dbReference type="HAMAP-Rule" id="MF_00360"/>
    </source>
</evidence>
<evidence type="ECO:0000256" key="2">
    <source>
        <dbReference type="SAM" id="MobiDB-lite"/>
    </source>
</evidence>
<evidence type="ECO:0000305" key="3"/>
<reference key="1">
    <citation type="submission" date="2009-05" db="EMBL/GenBank/DDBJ databases">
        <title>Complete sequence of Tolumonas auensis DSM 9187.</title>
        <authorList>
            <consortium name="US DOE Joint Genome Institute"/>
            <person name="Lucas S."/>
            <person name="Copeland A."/>
            <person name="Lapidus A."/>
            <person name="Glavina del Rio T."/>
            <person name="Tice H."/>
            <person name="Bruce D."/>
            <person name="Goodwin L."/>
            <person name="Pitluck S."/>
            <person name="Chertkov O."/>
            <person name="Brettin T."/>
            <person name="Detter J.C."/>
            <person name="Han C."/>
            <person name="Larimer F."/>
            <person name="Land M."/>
            <person name="Hauser L."/>
            <person name="Kyrpides N."/>
            <person name="Mikhailova N."/>
            <person name="Spring S."/>
            <person name="Beller H."/>
        </authorList>
    </citation>
    <scope>NUCLEOTIDE SEQUENCE [LARGE SCALE GENOMIC DNA]</scope>
    <source>
        <strain>DSM 9187 / NBRC 110442 / TA 4</strain>
    </source>
</reference>